<proteinExistence type="inferred from homology"/>
<protein>
    <recommendedName>
        <fullName evidence="2">Translation initiation factor IF-2</fullName>
    </recommendedName>
</protein>
<name>IF2_NITEC</name>
<dbReference type="EMBL" id="CP000450">
    <property type="protein sequence ID" value="ABI59889.1"/>
    <property type="molecule type" value="Genomic_DNA"/>
</dbReference>
<dbReference type="RefSeq" id="WP_011634695.1">
    <property type="nucleotide sequence ID" value="NC_008344.1"/>
</dbReference>
<dbReference type="SMR" id="Q0AFJ3"/>
<dbReference type="STRING" id="335283.Neut_1646"/>
<dbReference type="KEGG" id="net:Neut_1646"/>
<dbReference type="eggNOG" id="COG0532">
    <property type="taxonomic scope" value="Bacteria"/>
</dbReference>
<dbReference type="HOGENOM" id="CLU_006301_6_0_4"/>
<dbReference type="OrthoDB" id="9811804at2"/>
<dbReference type="Proteomes" id="UP000001966">
    <property type="component" value="Chromosome"/>
</dbReference>
<dbReference type="GO" id="GO:0005829">
    <property type="term" value="C:cytosol"/>
    <property type="evidence" value="ECO:0007669"/>
    <property type="project" value="TreeGrafter"/>
</dbReference>
<dbReference type="GO" id="GO:0005525">
    <property type="term" value="F:GTP binding"/>
    <property type="evidence" value="ECO:0007669"/>
    <property type="project" value="UniProtKB-KW"/>
</dbReference>
<dbReference type="GO" id="GO:0003924">
    <property type="term" value="F:GTPase activity"/>
    <property type="evidence" value="ECO:0007669"/>
    <property type="project" value="UniProtKB-UniRule"/>
</dbReference>
<dbReference type="GO" id="GO:0003743">
    <property type="term" value="F:translation initiation factor activity"/>
    <property type="evidence" value="ECO:0007669"/>
    <property type="project" value="UniProtKB-UniRule"/>
</dbReference>
<dbReference type="CDD" id="cd01887">
    <property type="entry name" value="IF2_eIF5B"/>
    <property type="match status" value="1"/>
</dbReference>
<dbReference type="CDD" id="cd03702">
    <property type="entry name" value="IF2_mtIF2_II"/>
    <property type="match status" value="1"/>
</dbReference>
<dbReference type="CDD" id="cd03692">
    <property type="entry name" value="mtIF2_IVc"/>
    <property type="match status" value="1"/>
</dbReference>
<dbReference type="FunFam" id="2.40.30.10:FF:000007">
    <property type="entry name" value="Translation initiation factor IF-2"/>
    <property type="match status" value="1"/>
</dbReference>
<dbReference type="FunFam" id="2.40.30.10:FF:000008">
    <property type="entry name" value="Translation initiation factor IF-2"/>
    <property type="match status" value="1"/>
</dbReference>
<dbReference type="FunFam" id="3.40.50.10050:FF:000001">
    <property type="entry name" value="Translation initiation factor IF-2"/>
    <property type="match status" value="1"/>
</dbReference>
<dbReference type="FunFam" id="3.40.50.300:FF:000019">
    <property type="entry name" value="Translation initiation factor IF-2"/>
    <property type="match status" value="1"/>
</dbReference>
<dbReference type="Gene3D" id="3.40.50.300">
    <property type="entry name" value="P-loop containing nucleotide triphosphate hydrolases"/>
    <property type="match status" value="1"/>
</dbReference>
<dbReference type="Gene3D" id="3.30.56.50">
    <property type="entry name" value="Putative DNA-binding domain, N-terminal subdomain of bacterial translation initiation factor IF2"/>
    <property type="match status" value="1"/>
</dbReference>
<dbReference type="Gene3D" id="2.40.30.10">
    <property type="entry name" value="Translation factors"/>
    <property type="match status" value="2"/>
</dbReference>
<dbReference type="Gene3D" id="3.40.50.10050">
    <property type="entry name" value="Translation initiation factor IF- 2, domain 3"/>
    <property type="match status" value="1"/>
</dbReference>
<dbReference type="HAMAP" id="MF_00100_B">
    <property type="entry name" value="IF_2_B"/>
    <property type="match status" value="1"/>
</dbReference>
<dbReference type="InterPro" id="IPR009061">
    <property type="entry name" value="DNA-bd_dom_put_sf"/>
</dbReference>
<dbReference type="InterPro" id="IPR053905">
    <property type="entry name" value="EF-G-like_DII"/>
</dbReference>
<dbReference type="InterPro" id="IPR013575">
    <property type="entry name" value="IF2_assoc_dom_bac"/>
</dbReference>
<dbReference type="InterPro" id="IPR044145">
    <property type="entry name" value="IF2_II"/>
</dbReference>
<dbReference type="InterPro" id="IPR006847">
    <property type="entry name" value="IF2_N"/>
</dbReference>
<dbReference type="InterPro" id="IPR027417">
    <property type="entry name" value="P-loop_NTPase"/>
</dbReference>
<dbReference type="InterPro" id="IPR005225">
    <property type="entry name" value="Small_GTP-bd"/>
</dbReference>
<dbReference type="InterPro" id="IPR000795">
    <property type="entry name" value="T_Tr_GTP-bd_dom"/>
</dbReference>
<dbReference type="InterPro" id="IPR000178">
    <property type="entry name" value="TF_IF2_bacterial-like"/>
</dbReference>
<dbReference type="InterPro" id="IPR015760">
    <property type="entry name" value="TIF_IF2"/>
</dbReference>
<dbReference type="InterPro" id="IPR023115">
    <property type="entry name" value="TIF_IF2_dom3"/>
</dbReference>
<dbReference type="InterPro" id="IPR036925">
    <property type="entry name" value="TIF_IF2_dom3_sf"/>
</dbReference>
<dbReference type="InterPro" id="IPR009000">
    <property type="entry name" value="Transl_B-barrel_sf"/>
</dbReference>
<dbReference type="NCBIfam" id="TIGR00487">
    <property type="entry name" value="IF-2"/>
    <property type="match status" value="1"/>
</dbReference>
<dbReference type="NCBIfam" id="TIGR00231">
    <property type="entry name" value="small_GTP"/>
    <property type="match status" value="1"/>
</dbReference>
<dbReference type="PANTHER" id="PTHR43381:SF5">
    <property type="entry name" value="TR-TYPE G DOMAIN-CONTAINING PROTEIN"/>
    <property type="match status" value="1"/>
</dbReference>
<dbReference type="PANTHER" id="PTHR43381">
    <property type="entry name" value="TRANSLATION INITIATION FACTOR IF-2-RELATED"/>
    <property type="match status" value="1"/>
</dbReference>
<dbReference type="Pfam" id="PF22042">
    <property type="entry name" value="EF-G_D2"/>
    <property type="match status" value="1"/>
</dbReference>
<dbReference type="Pfam" id="PF00009">
    <property type="entry name" value="GTP_EFTU"/>
    <property type="match status" value="1"/>
</dbReference>
<dbReference type="Pfam" id="PF11987">
    <property type="entry name" value="IF-2"/>
    <property type="match status" value="1"/>
</dbReference>
<dbReference type="Pfam" id="PF08364">
    <property type="entry name" value="IF2_assoc"/>
    <property type="match status" value="1"/>
</dbReference>
<dbReference type="Pfam" id="PF04760">
    <property type="entry name" value="IF2_N"/>
    <property type="match status" value="2"/>
</dbReference>
<dbReference type="SUPFAM" id="SSF52156">
    <property type="entry name" value="Initiation factor IF2/eIF5b, domain 3"/>
    <property type="match status" value="1"/>
</dbReference>
<dbReference type="SUPFAM" id="SSF52540">
    <property type="entry name" value="P-loop containing nucleoside triphosphate hydrolases"/>
    <property type="match status" value="1"/>
</dbReference>
<dbReference type="SUPFAM" id="SSF46955">
    <property type="entry name" value="Putative DNA-binding domain"/>
    <property type="match status" value="1"/>
</dbReference>
<dbReference type="SUPFAM" id="SSF50447">
    <property type="entry name" value="Translation proteins"/>
    <property type="match status" value="2"/>
</dbReference>
<dbReference type="PROSITE" id="PS51722">
    <property type="entry name" value="G_TR_2"/>
    <property type="match status" value="1"/>
</dbReference>
<dbReference type="PROSITE" id="PS01176">
    <property type="entry name" value="IF2"/>
    <property type="match status" value="1"/>
</dbReference>
<feature type="chain" id="PRO_1000057659" description="Translation initiation factor IF-2">
    <location>
        <begin position="1"/>
        <end position="888"/>
    </location>
</feature>
<feature type="domain" description="tr-type G">
    <location>
        <begin position="390"/>
        <end position="559"/>
    </location>
</feature>
<feature type="region of interest" description="Disordered" evidence="3">
    <location>
        <begin position="96"/>
        <end position="122"/>
    </location>
</feature>
<feature type="region of interest" description="Disordered" evidence="3">
    <location>
        <begin position="158"/>
        <end position="302"/>
    </location>
</feature>
<feature type="region of interest" description="G1" evidence="1">
    <location>
        <begin position="399"/>
        <end position="406"/>
    </location>
</feature>
<feature type="region of interest" description="G2" evidence="1">
    <location>
        <begin position="424"/>
        <end position="428"/>
    </location>
</feature>
<feature type="region of interest" description="G3" evidence="1">
    <location>
        <begin position="445"/>
        <end position="448"/>
    </location>
</feature>
<feature type="region of interest" description="G4" evidence="1">
    <location>
        <begin position="499"/>
        <end position="502"/>
    </location>
</feature>
<feature type="region of interest" description="G5" evidence="1">
    <location>
        <begin position="535"/>
        <end position="537"/>
    </location>
</feature>
<feature type="compositionally biased region" description="Basic and acidic residues" evidence="3">
    <location>
        <begin position="98"/>
        <end position="114"/>
    </location>
</feature>
<feature type="compositionally biased region" description="Basic and acidic residues" evidence="3">
    <location>
        <begin position="158"/>
        <end position="167"/>
    </location>
</feature>
<feature type="compositionally biased region" description="Polar residues" evidence="3">
    <location>
        <begin position="181"/>
        <end position="206"/>
    </location>
</feature>
<feature type="compositionally biased region" description="Low complexity" evidence="3">
    <location>
        <begin position="207"/>
        <end position="225"/>
    </location>
</feature>
<feature type="compositionally biased region" description="Basic and acidic residues" evidence="3">
    <location>
        <begin position="226"/>
        <end position="243"/>
    </location>
</feature>
<feature type="compositionally biased region" description="Basic and acidic residues" evidence="3">
    <location>
        <begin position="253"/>
        <end position="269"/>
    </location>
</feature>
<feature type="binding site" evidence="2">
    <location>
        <begin position="399"/>
        <end position="406"/>
    </location>
    <ligand>
        <name>GTP</name>
        <dbReference type="ChEBI" id="CHEBI:37565"/>
    </ligand>
</feature>
<feature type="binding site" evidence="2">
    <location>
        <begin position="445"/>
        <end position="449"/>
    </location>
    <ligand>
        <name>GTP</name>
        <dbReference type="ChEBI" id="CHEBI:37565"/>
    </ligand>
</feature>
<feature type="binding site" evidence="2">
    <location>
        <begin position="499"/>
        <end position="502"/>
    </location>
    <ligand>
        <name>GTP</name>
        <dbReference type="ChEBI" id="CHEBI:37565"/>
    </ligand>
</feature>
<accession>Q0AFJ3</accession>
<comment type="function">
    <text evidence="2">One of the essential components for the initiation of protein synthesis. Protects formylmethionyl-tRNA from spontaneous hydrolysis and promotes its binding to the 30S ribosomal subunits. Also involved in the hydrolysis of GTP during the formation of the 70S ribosomal complex.</text>
</comment>
<comment type="subcellular location">
    <subcellularLocation>
        <location evidence="2">Cytoplasm</location>
    </subcellularLocation>
</comment>
<comment type="similarity">
    <text evidence="2">Belongs to the TRAFAC class translation factor GTPase superfamily. Classic translation factor GTPase family. IF-2 subfamily.</text>
</comment>
<sequence>MTQMTVEQFAHDLGMLPNLLLEQLQAAGVAKRSAADFVTEQDKTQLLDYLRKSHGSSGSRTKITLARRQTTEIKQSDSAGRPRTIEVKVRKKRVLTTKQDESDAAGKRAAEDVSLRTAEAPEAPEAVPVKSVLDAEQIALRAEEARKRSELMARQAAELKEKQEKRRQQVTAQTEVKKESTQVQEPGSETAAVSGSVAATQPESTETAAVTPSATITVTTQTTPAAKERAPQKPAVKPEEKGEKKKKQARQQEAWKDEPVKRRESKARGDVSGGQEWRMRKDKHGRSRSDESQSQHAFSAPTEPVVHEVLIPETISVAVLAQKMAVKAAEVIKVLMKMGNMVTINQMLDQDTAMIVVEEMGHVAKIAAPDNPEAFLEEVDLSPDEARMESRAPVVTVMGHVDHGKTSLLDYIRRTRVAGGEAGGITQHIGAYHVKTSRGVVTFLDTPGHEAFTAMRARGAKITDIVILVVAADDGVMPQTIEAVHHAKAASIPIVVAVNKMDKPEANLERIKQELVNHGVVPEDWGGDAMFIGVSAKTGQGIDELLEAVLLQAEVLELKAVRDAPAKGVIIESRLDKGRGPVATVLVQSGTLRRGDVVLTGAVFGKIRAMLDERGKSVSEAGTSIPVEIQGLSEVAAAGEVFIALSDERKAREIALFRQGKFRDVRLDKLHVAKMEDVFGHQEDISTLNLIIKADVQGSCEALAYALKKLETDEVKINIVHSGVGAIIESDINLALASKAVVIGFNCRADLGARKLIASTGVDVRYYNIIYEAVDEVKKALSGMMTPDRKEKILGLVDIREIYRISKVGVVAGCYVLEGLIRRDAPVRVLRDGVVIHSGSLDSLKRFKDDVKEVKSGFECGLSLKNFNDIQQGDQIEVYEIVETARVL</sequence>
<evidence type="ECO:0000250" key="1"/>
<evidence type="ECO:0000255" key="2">
    <source>
        <dbReference type="HAMAP-Rule" id="MF_00100"/>
    </source>
</evidence>
<evidence type="ECO:0000256" key="3">
    <source>
        <dbReference type="SAM" id="MobiDB-lite"/>
    </source>
</evidence>
<reference key="1">
    <citation type="journal article" date="2007" name="Environ. Microbiol.">
        <title>Whole-genome analysis of the ammonia-oxidizing bacterium, Nitrosomonas eutropha C91: implications for niche adaptation.</title>
        <authorList>
            <person name="Stein L.Y."/>
            <person name="Arp D.J."/>
            <person name="Berube P.M."/>
            <person name="Chain P.S."/>
            <person name="Hauser L."/>
            <person name="Jetten M.S."/>
            <person name="Klotz M.G."/>
            <person name="Larimer F.W."/>
            <person name="Norton J.M."/>
            <person name="Op den Camp H.J.M."/>
            <person name="Shin M."/>
            <person name="Wei X."/>
        </authorList>
    </citation>
    <scope>NUCLEOTIDE SEQUENCE [LARGE SCALE GENOMIC DNA]</scope>
    <source>
        <strain>DSM 101675 / C91 / Nm57</strain>
    </source>
</reference>
<organism>
    <name type="scientific">Nitrosomonas eutropha (strain DSM 101675 / C91 / Nm57)</name>
    <dbReference type="NCBI Taxonomy" id="335283"/>
    <lineage>
        <taxon>Bacteria</taxon>
        <taxon>Pseudomonadati</taxon>
        <taxon>Pseudomonadota</taxon>
        <taxon>Betaproteobacteria</taxon>
        <taxon>Nitrosomonadales</taxon>
        <taxon>Nitrosomonadaceae</taxon>
        <taxon>Nitrosomonas</taxon>
    </lineage>
</organism>
<gene>
    <name evidence="2" type="primary">infB</name>
    <name type="ordered locus">Neut_1646</name>
</gene>
<keyword id="KW-0963">Cytoplasm</keyword>
<keyword id="KW-0342">GTP-binding</keyword>
<keyword id="KW-0396">Initiation factor</keyword>
<keyword id="KW-0547">Nucleotide-binding</keyword>
<keyword id="KW-0648">Protein biosynthesis</keyword>